<dbReference type="EMBL" id="CP001016">
    <property type="protein sequence ID" value="ACB94078.1"/>
    <property type="molecule type" value="Genomic_DNA"/>
</dbReference>
<dbReference type="RefSeq" id="WP_012383436.1">
    <property type="nucleotide sequence ID" value="NC_010581.1"/>
</dbReference>
<dbReference type="SMR" id="B2IE54"/>
<dbReference type="STRING" id="395963.Bind_0425"/>
<dbReference type="KEGG" id="bid:Bind_0425"/>
<dbReference type="eggNOG" id="COG0333">
    <property type="taxonomic scope" value="Bacteria"/>
</dbReference>
<dbReference type="HOGENOM" id="CLU_129084_2_2_5"/>
<dbReference type="OrthoDB" id="9801927at2"/>
<dbReference type="Proteomes" id="UP000001695">
    <property type="component" value="Chromosome"/>
</dbReference>
<dbReference type="GO" id="GO:0015934">
    <property type="term" value="C:large ribosomal subunit"/>
    <property type="evidence" value="ECO:0007669"/>
    <property type="project" value="InterPro"/>
</dbReference>
<dbReference type="GO" id="GO:0003735">
    <property type="term" value="F:structural constituent of ribosome"/>
    <property type="evidence" value="ECO:0007669"/>
    <property type="project" value="InterPro"/>
</dbReference>
<dbReference type="GO" id="GO:0006412">
    <property type="term" value="P:translation"/>
    <property type="evidence" value="ECO:0007669"/>
    <property type="project" value="UniProtKB-UniRule"/>
</dbReference>
<dbReference type="Gene3D" id="1.20.5.640">
    <property type="entry name" value="Single helix bin"/>
    <property type="match status" value="1"/>
</dbReference>
<dbReference type="HAMAP" id="MF_00340">
    <property type="entry name" value="Ribosomal_bL32"/>
    <property type="match status" value="1"/>
</dbReference>
<dbReference type="InterPro" id="IPR002677">
    <property type="entry name" value="Ribosomal_bL32"/>
</dbReference>
<dbReference type="InterPro" id="IPR044957">
    <property type="entry name" value="Ribosomal_bL32_bact"/>
</dbReference>
<dbReference type="InterPro" id="IPR011332">
    <property type="entry name" value="Ribosomal_zn-bd"/>
</dbReference>
<dbReference type="NCBIfam" id="TIGR01031">
    <property type="entry name" value="rpmF_bact"/>
    <property type="match status" value="1"/>
</dbReference>
<dbReference type="PANTHER" id="PTHR35534">
    <property type="entry name" value="50S RIBOSOMAL PROTEIN L32"/>
    <property type="match status" value="1"/>
</dbReference>
<dbReference type="PANTHER" id="PTHR35534:SF1">
    <property type="entry name" value="LARGE RIBOSOMAL SUBUNIT PROTEIN BL32"/>
    <property type="match status" value="1"/>
</dbReference>
<dbReference type="Pfam" id="PF01783">
    <property type="entry name" value="Ribosomal_L32p"/>
    <property type="match status" value="1"/>
</dbReference>
<dbReference type="SUPFAM" id="SSF57829">
    <property type="entry name" value="Zn-binding ribosomal proteins"/>
    <property type="match status" value="1"/>
</dbReference>
<name>RL32_BEII9</name>
<comment type="similarity">
    <text evidence="1">Belongs to the bacterial ribosomal protein bL32 family.</text>
</comment>
<protein>
    <recommendedName>
        <fullName evidence="1">Large ribosomal subunit protein bL32</fullName>
    </recommendedName>
    <alternativeName>
        <fullName evidence="3">50S ribosomal protein L32</fullName>
    </alternativeName>
</protein>
<keyword id="KW-1185">Reference proteome</keyword>
<keyword id="KW-0687">Ribonucleoprotein</keyword>
<keyword id="KW-0689">Ribosomal protein</keyword>
<gene>
    <name evidence="1" type="primary">rpmF</name>
    <name type="ordered locus">Bind_0425</name>
</gene>
<accession>B2IE54</accession>
<evidence type="ECO:0000255" key="1">
    <source>
        <dbReference type="HAMAP-Rule" id="MF_00340"/>
    </source>
</evidence>
<evidence type="ECO:0000256" key="2">
    <source>
        <dbReference type="SAM" id="MobiDB-lite"/>
    </source>
</evidence>
<evidence type="ECO:0000305" key="3"/>
<sequence length="63" mass="7372">MAVPKRKTSRMKRGFRRSADAIKAPTYIEDKDSGELRRPHHVDLKTGMYRGRQIFTPKVREEA</sequence>
<proteinExistence type="inferred from homology"/>
<feature type="chain" id="PRO_1000120089" description="Large ribosomal subunit protein bL32">
    <location>
        <begin position="1"/>
        <end position="63"/>
    </location>
</feature>
<feature type="region of interest" description="Disordered" evidence="2">
    <location>
        <begin position="1"/>
        <end position="22"/>
    </location>
</feature>
<feature type="compositionally biased region" description="Basic residues" evidence="2">
    <location>
        <begin position="1"/>
        <end position="16"/>
    </location>
</feature>
<organism>
    <name type="scientific">Beijerinckia indica subsp. indica (strain ATCC 9039 / DSM 1715 / NCIMB 8712)</name>
    <dbReference type="NCBI Taxonomy" id="395963"/>
    <lineage>
        <taxon>Bacteria</taxon>
        <taxon>Pseudomonadati</taxon>
        <taxon>Pseudomonadota</taxon>
        <taxon>Alphaproteobacteria</taxon>
        <taxon>Hyphomicrobiales</taxon>
        <taxon>Beijerinckiaceae</taxon>
        <taxon>Beijerinckia</taxon>
    </lineage>
</organism>
<reference key="1">
    <citation type="journal article" date="2010" name="J. Bacteriol.">
        <title>Complete genome sequence of Beijerinckia indica subsp. indica.</title>
        <authorList>
            <person name="Tamas I."/>
            <person name="Dedysh S.N."/>
            <person name="Liesack W."/>
            <person name="Stott M.B."/>
            <person name="Alam M."/>
            <person name="Murrell J.C."/>
            <person name="Dunfield P.F."/>
        </authorList>
    </citation>
    <scope>NUCLEOTIDE SEQUENCE [LARGE SCALE GENOMIC DNA]</scope>
    <source>
        <strain>ATCC 9039 / DSM 1715 / NCIMB 8712</strain>
    </source>
</reference>